<organism>
    <name type="scientific">Brucella suis (strain ATCC 23445 / NCTC 10510)</name>
    <dbReference type="NCBI Taxonomy" id="470137"/>
    <lineage>
        <taxon>Bacteria</taxon>
        <taxon>Pseudomonadati</taxon>
        <taxon>Pseudomonadota</taxon>
        <taxon>Alphaproteobacteria</taxon>
        <taxon>Hyphomicrobiales</taxon>
        <taxon>Brucellaceae</taxon>
        <taxon>Brucella/Ochrobactrum group</taxon>
        <taxon>Brucella</taxon>
    </lineage>
</organism>
<protein>
    <recommendedName>
        <fullName evidence="1">Large ribosomal subunit protein bL12</fullName>
    </recommendedName>
    <alternativeName>
        <fullName evidence="2">50S ribosomal protein L7/L12</fullName>
    </alternativeName>
</protein>
<reference key="1">
    <citation type="submission" date="2007-12" db="EMBL/GenBank/DDBJ databases">
        <title>Brucella suis ATCC 23445 whole genome shotgun sequencing project.</title>
        <authorList>
            <person name="Setubal J.C."/>
            <person name="Bowns C."/>
            <person name="Boyle S."/>
            <person name="Crasta O.R."/>
            <person name="Czar M.J."/>
            <person name="Dharmanolla C."/>
            <person name="Gillespie J.J."/>
            <person name="Kenyon R.W."/>
            <person name="Lu J."/>
            <person name="Mane S."/>
            <person name="Mohapatra S."/>
            <person name="Nagrani S."/>
            <person name="Purkayastha A."/>
            <person name="Rajasimha H.K."/>
            <person name="Shallom J.M."/>
            <person name="Shallom S."/>
            <person name="Shukla M."/>
            <person name="Snyder E.E."/>
            <person name="Sobral B.W."/>
            <person name="Wattam A.R."/>
            <person name="Will R."/>
            <person name="Williams K."/>
            <person name="Yoo H."/>
            <person name="Bruce D."/>
            <person name="Detter C."/>
            <person name="Munk C."/>
            <person name="Brettin T.S."/>
        </authorList>
    </citation>
    <scope>NUCLEOTIDE SEQUENCE [LARGE SCALE GENOMIC DNA]</scope>
    <source>
        <strain>ATCC 23445 / NCTC 10510</strain>
    </source>
</reference>
<proteinExistence type="inferred from homology"/>
<keyword id="KW-0687">Ribonucleoprotein</keyword>
<keyword id="KW-0689">Ribosomal protein</keyword>
<gene>
    <name evidence="1" type="primary">rplL</name>
    <name type="ordered locus">BSUIS_A1292</name>
</gene>
<feature type="chain" id="PRO_1000079783" description="Large ribosomal subunit protein bL12">
    <location>
        <begin position="1"/>
        <end position="124"/>
    </location>
</feature>
<name>RL7_BRUSI</name>
<accession>B0CH42</accession>
<evidence type="ECO:0000255" key="1">
    <source>
        <dbReference type="HAMAP-Rule" id="MF_00368"/>
    </source>
</evidence>
<evidence type="ECO:0000305" key="2"/>
<sequence>MADLAKIVEDLSALTVLEAAELSKLLEEKWGVSAAAPVAVAAAGGAAPAAAAEEKTEFDVVLADGGANKINVIKEVRALTGLGLKEAKDLVEGAPKAVKEGASKDEAEKIKAQLEAAGAKVELK</sequence>
<comment type="function">
    <text evidence="1">Forms part of the ribosomal stalk which helps the ribosome interact with GTP-bound translation factors. Is thus essential for accurate translation.</text>
</comment>
<comment type="subunit">
    <text evidence="1">Homodimer. Part of the ribosomal stalk of the 50S ribosomal subunit. Forms a multimeric L10(L12)X complex, where L10 forms an elongated spine to which 2 to 4 L12 dimers bind in a sequential fashion. Binds GTP-bound translation factors.</text>
</comment>
<comment type="similarity">
    <text evidence="1">Belongs to the bacterial ribosomal protein bL12 family.</text>
</comment>
<dbReference type="EMBL" id="CP000911">
    <property type="protein sequence ID" value="ABY38343.1"/>
    <property type="molecule type" value="Genomic_DNA"/>
</dbReference>
<dbReference type="RefSeq" id="WP_002964371.1">
    <property type="nucleotide sequence ID" value="NC_010169.1"/>
</dbReference>
<dbReference type="SMR" id="B0CH42"/>
<dbReference type="GeneID" id="97533516"/>
<dbReference type="KEGG" id="bmt:BSUIS_A1292"/>
<dbReference type="HOGENOM" id="CLU_086499_3_0_5"/>
<dbReference type="Proteomes" id="UP000008545">
    <property type="component" value="Chromosome I"/>
</dbReference>
<dbReference type="GO" id="GO:0022625">
    <property type="term" value="C:cytosolic large ribosomal subunit"/>
    <property type="evidence" value="ECO:0007669"/>
    <property type="project" value="TreeGrafter"/>
</dbReference>
<dbReference type="GO" id="GO:0003729">
    <property type="term" value="F:mRNA binding"/>
    <property type="evidence" value="ECO:0007669"/>
    <property type="project" value="TreeGrafter"/>
</dbReference>
<dbReference type="GO" id="GO:0003735">
    <property type="term" value="F:structural constituent of ribosome"/>
    <property type="evidence" value="ECO:0007669"/>
    <property type="project" value="InterPro"/>
</dbReference>
<dbReference type="GO" id="GO:0006412">
    <property type="term" value="P:translation"/>
    <property type="evidence" value="ECO:0007669"/>
    <property type="project" value="UniProtKB-UniRule"/>
</dbReference>
<dbReference type="CDD" id="cd00387">
    <property type="entry name" value="Ribosomal_L7_L12"/>
    <property type="match status" value="1"/>
</dbReference>
<dbReference type="FunFam" id="3.30.1390.10:FF:000001">
    <property type="entry name" value="50S ribosomal protein L7/L12"/>
    <property type="match status" value="1"/>
</dbReference>
<dbReference type="Gene3D" id="3.30.1390.10">
    <property type="match status" value="1"/>
</dbReference>
<dbReference type="Gene3D" id="1.20.5.710">
    <property type="entry name" value="Single helix bin"/>
    <property type="match status" value="1"/>
</dbReference>
<dbReference type="HAMAP" id="MF_00368">
    <property type="entry name" value="Ribosomal_bL12"/>
    <property type="match status" value="1"/>
</dbReference>
<dbReference type="InterPro" id="IPR000206">
    <property type="entry name" value="Ribosomal_bL12"/>
</dbReference>
<dbReference type="InterPro" id="IPR013823">
    <property type="entry name" value="Ribosomal_bL12_C"/>
</dbReference>
<dbReference type="InterPro" id="IPR014719">
    <property type="entry name" value="Ribosomal_bL12_C/ClpS-like"/>
</dbReference>
<dbReference type="InterPro" id="IPR008932">
    <property type="entry name" value="Ribosomal_bL12_oligo"/>
</dbReference>
<dbReference type="InterPro" id="IPR036235">
    <property type="entry name" value="Ribosomal_bL12_oligo_N_sf"/>
</dbReference>
<dbReference type="NCBIfam" id="TIGR00855">
    <property type="entry name" value="L12"/>
    <property type="match status" value="1"/>
</dbReference>
<dbReference type="PANTHER" id="PTHR45987">
    <property type="entry name" value="39S RIBOSOMAL PROTEIN L12"/>
    <property type="match status" value="1"/>
</dbReference>
<dbReference type="PANTHER" id="PTHR45987:SF4">
    <property type="entry name" value="LARGE RIBOSOMAL SUBUNIT PROTEIN BL12M"/>
    <property type="match status" value="1"/>
</dbReference>
<dbReference type="Pfam" id="PF00542">
    <property type="entry name" value="Ribosomal_L12"/>
    <property type="match status" value="1"/>
</dbReference>
<dbReference type="Pfam" id="PF16320">
    <property type="entry name" value="Ribosomal_L12_N"/>
    <property type="match status" value="1"/>
</dbReference>
<dbReference type="SUPFAM" id="SSF54736">
    <property type="entry name" value="ClpS-like"/>
    <property type="match status" value="1"/>
</dbReference>
<dbReference type="SUPFAM" id="SSF48300">
    <property type="entry name" value="Ribosomal protein L7/12, oligomerisation (N-terminal) domain"/>
    <property type="match status" value="1"/>
</dbReference>